<name>RS11_LEPIN</name>
<gene>
    <name evidence="1" type="primary">rpsK</name>
    <name type="ordered locus">LA_0763</name>
</gene>
<protein>
    <recommendedName>
        <fullName evidence="1">Small ribosomal subunit protein uS11</fullName>
    </recommendedName>
    <alternativeName>
        <fullName evidence="2">30S ribosomal protein S11</fullName>
    </alternativeName>
</protein>
<accession>Q9XD11</accession>
<organism>
    <name type="scientific">Leptospira interrogans serogroup Icterohaemorrhagiae serovar Lai (strain 56601)</name>
    <dbReference type="NCBI Taxonomy" id="189518"/>
    <lineage>
        <taxon>Bacteria</taxon>
        <taxon>Pseudomonadati</taxon>
        <taxon>Spirochaetota</taxon>
        <taxon>Spirochaetia</taxon>
        <taxon>Leptospirales</taxon>
        <taxon>Leptospiraceae</taxon>
        <taxon>Leptospira</taxon>
    </lineage>
</organism>
<feature type="chain" id="PRO_0000123168" description="Small ribosomal subunit protein uS11">
    <location>
        <begin position="1"/>
        <end position="136"/>
    </location>
</feature>
<comment type="function">
    <text evidence="1">Located on the platform of the 30S subunit, it bridges several disparate RNA helices of the 16S rRNA. Forms part of the Shine-Dalgarno cleft in the 70S ribosome.</text>
</comment>
<comment type="subunit">
    <text evidence="1">Part of the 30S ribosomal subunit. Interacts with proteins S7 and S18. Binds to IF-3.</text>
</comment>
<comment type="similarity">
    <text evidence="1">Belongs to the universal ribosomal protein uS11 family.</text>
</comment>
<dbReference type="EMBL" id="AF115283">
    <property type="protein sequence ID" value="AAD40608.1"/>
    <property type="molecule type" value="Genomic_DNA"/>
</dbReference>
<dbReference type="EMBL" id="AE010300">
    <property type="protein sequence ID" value="AAN47962.1"/>
    <property type="molecule type" value="Genomic_DNA"/>
</dbReference>
<dbReference type="RefSeq" id="NP_710944.1">
    <property type="nucleotide sequence ID" value="NC_004342.2"/>
</dbReference>
<dbReference type="RefSeq" id="WP_000752686.1">
    <property type="nucleotide sequence ID" value="NC_004342.2"/>
</dbReference>
<dbReference type="SMR" id="Q9XD11"/>
<dbReference type="FunCoup" id="Q9XD11">
    <property type="interactions" value="531"/>
</dbReference>
<dbReference type="STRING" id="189518.LA_0763"/>
<dbReference type="PaxDb" id="189518-LA_0763"/>
<dbReference type="EnsemblBacteria" id="AAN47962">
    <property type="protein sequence ID" value="AAN47962"/>
    <property type="gene ID" value="LA_0763"/>
</dbReference>
<dbReference type="GeneID" id="61172975"/>
<dbReference type="KEGG" id="lil:LA_0763"/>
<dbReference type="PATRIC" id="fig|189518.3.peg.770"/>
<dbReference type="HOGENOM" id="CLU_072439_5_0_12"/>
<dbReference type="InParanoid" id="Q9XD11"/>
<dbReference type="OrthoDB" id="9806415at2"/>
<dbReference type="PRO" id="PR:Q9XD11"/>
<dbReference type="Proteomes" id="UP000001408">
    <property type="component" value="Chromosome I"/>
</dbReference>
<dbReference type="GO" id="GO:0022627">
    <property type="term" value="C:cytosolic small ribosomal subunit"/>
    <property type="evidence" value="ECO:0000318"/>
    <property type="project" value="GO_Central"/>
</dbReference>
<dbReference type="GO" id="GO:0019843">
    <property type="term" value="F:rRNA binding"/>
    <property type="evidence" value="ECO:0007669"/>
    <property type="project" value="UniProtKB-UniRule"/>
</dbReference>
<dbReference type="GO" id="GO:0003735">
    <property type="term" value="F:structural constituent of ribosome"/>
    <property type="evidence" value="ECO:0000318"/>
    <property type="project" value="GO_Central"/>
</dbReference>
<dbReference type="GO" id="GO:0006412">
    <property type="term" value="P:translation"/>
    <property type="evidence" value="ECO:0000318"/>
    <property type="project" value="GO_Central"/>
</dbReference>
<dbReference type="FunFam" id="3.30.420.80:FF:000012">
    <property type="entry name" value="30S ribosomal protein S11"/>
    <property type="match status" value="1"/>
</dbReference>
<dbReference type="Gene3D" id="3.30.420.80">
    <property type="entry name" value="Ribosomal protein S11"/>
    <property type="match status" value="1"/>
</dbReference>
<dbReference type="HAMAP" id="MF_01310">
    <property type="entry name" value="Ribosomal_uS11"/>
    <property type="match status" value="1"/>
</dbReference>
<dbReference type="InterPro" id="IPR001971">
    <property type="entry name" value="Ribosomal_uS11"/>
</dbReference>
<dbReference type="InterPro" id="IPR019981">
    <property type="entry name" value="Ribosomal_uS11_bac-type"/>
</dbReference>
<dbReference type="InterPro" id="IPR018102">
    <property type="entry name" value="Ribosomal_uS11_CS"/>
</dbReference>
<dbReference type="InterPro" id="IPR036967">
    <property type="entry name" value="Ribosomal_uS11_sf"/>
</dbReference>
<dbReference type="NCBIfam" id="NF003698">
    <property type="entry name" value="PRK05309.1"/>
    <property type="match status" value="1"/>
</dbReference>
<dbReference type="NCBIfam" id="TIGR03632">
    <property type="entry name" value="uS11_bact"/>
    <property type="match status" value="1"/>
</dbReference>
<dbReference type="PANTHER" id="PTHR11759">
    <property type="entry name" value="40S RIBOSOMAL PROTEIN S14/30S RIBOSOMAL PROTEIN S11"/>
    <property type="match status" value="1"/>
</dbReference>
<dbReference type="Pfam" id="PF00411">
    <property type="entry name" value="Ribosomal_S11"/>
    <property type="match status" value="1"/>
</dbReference>
<dbReference type="PIRSF" id="PIRSF002131">
    <property type="entry name" value="Ribosomal_S11"/>
    <property type="match status" value="1"/>
</dbReference>
<dbReference type="SUPFAM" id="SSF53137">
    <property type="entry name" value="Translational machinery components"/>
    <property type="match status" value="1"/>
</dbReference>
<dbReference type="PROSITE" id="PS00054">
    <property type="entry name" value="RIBOSOMAL_S11"/>
    <property type="match status" value="1"/>
</dbReference>
<evidence type="ECO:0000255" key="1">
    <source>
        <dbReference type="HAMAP-Rule" id="MF_01310"/>
    </source>
</evidence>
<evidence type="ECO:0000305" key="2"/>
<sequence length="136" mass="14702">MADDKKSVKKEKKVKKKEKKIVPRGKVYITASFNNTIVTITDMAGNTISWSTSGAMGFRGSKKSTPYAAQIAAGNAAEKAMDSAGLQEVDVMVSGPGIGRESAIRSLVARGLNIKMIKDVTPLPHNGCRPRKRRRV</sequence>
<proteinExistence type="inferred from homology"/>
<reference key="1">
    <citation type="journal article" date="2000" name="FEMS Microbiol. Lett.">
        <title>Characterization of the Leptospira interrogans S10-spc-alpha operon.</title>
        <authorList>
            <person name="Zuerner R.L."/>
            <person name="Hartskeerl R.A."/>
            <person name="van de Kemp H."/>
            <person name="Bal A.E."/>
        </authorList>
    </citation>
    <scope>NUCLEOTIDE SEQUENCE [GENOMIC DNA]</scope>
    <source>
        <strain>Lai / Serogroup Icterohaemorrhagiae / Serovar lai</strain>
    </source>
</reference>
<reference key="2">
    <citation type="journal article" date="2003" name="Nature">
        <title>Unique physiological and pathogenic features of Leptospira interrogans revealed by whole-genome sequencing.</title>
        <authorList>
            <person name="Ren S.-X."/>
            <person name="Fu G."/>
            <person name="Jiang X.-G."/>
            <person name="Zeng R."/>
            <person name="Miao Y.-G."/>
            <person name="Xu H."/>
            <person name="Zhang Y.-X."/>
            <person name="Xiong H."/>
            <person name="Lu G."/>
            <person name="Lu L.-F."/>
            <person name="Jiang H.-Q."/>
            <person name="Jia J."/>
            <person name="Tu Y.-F."/>
            <person name="Jiang J.-X."/>
            <person name="Gu W.-Y."/>
            <person name="Zhang Y.-Q."/>
            <person name="Cai Z."/>
            <person name="Sheng H.-H."/>
            <person name="Yin H.-F."/>
            <person name="Zhang Y."/>
            <person name="Zhu G.-F."/>
            <person name="Wan M."/>
            <person name="Huang H.-L."/>
            <person name="Qian Z."/>
            <person name="Wang S.-Y."/>
            <person name="Ma W."/>
            <person name="Yao Z.-J."/>
            <person name="Shen Y."/>
            <person name="Qiang B.-Q."/>
            <person name="Xia Q.-C."/>
            <person name="Guo X.-K."/>
            <person name="Danchin A."/>
            <person name="Saint Girons I."/>
            <person name="Somerville R.L."/>
            <person name="Wen Y.-M."/>
            <person name="Shi M.-H."/>
            <person name="Chen Z."/>
            <person name="Xu J.-G."/>
            <person name="Zhao G.-P."/>
        </authorList>
    </citation>
    <scope>NUCLEOTIDE SEQUENCE [LARGE SCALE GENOMIC DNA]</scope>
    <source>
        <strain>56601</strain>
    </source>
</reference>
<keyword id="KW-1185">Reference proteome</keyword>
<keyword id="KW-0687">Ribonucleoprotein</keyword>
<keyword id="KW-0689">Ribosomal protein</keyword>
<keyword id="KW-0694">RNA-binding</keyword>
<keyword id="KW-0699">rRNA-binding</keyword>